<dbReference type="EC" id="2.8.4.3" evidence="1"/>
<dbReference type="EMBL" id="CP000032">
    <property type="protein sequence ID" value="AAV97143.1"/>
    <property type="status" value="ALT_INIT"/>
    <property type="molecule type" value="Genomic_DNA"/>
</dbReference>
<dbReference type="RefSeq" id="WP_044029485.1">
    <property type="nucleotide sequence ID" value="NC_006569.1"/>
</dbReference>
<dbReference type="SMR" id="Q5LLM0"/>
<dbReference type="PaxDb" id="246200-SPOA0002"/>
<dbReference type="KEGG" id="sil:SPOA0002"/>
<dbReference type="eggNOG" id="COG0621">
    <property type="taxonomic scope" value="Bacteria"/>
</dbReference>
<dbReference type="HOGENOM" id="CLU_018697_2_0_5"/>
<dbReference type="OrthoDB" id="9805215at2"/>
<dbReference type="Proteomes" id="UP000001023">
    <property type="component" value="Plasmid megaplasmid"/>
</dbReference>
<dbReference type="GO" id="GO:0005829">
    <property type="term" value="C:cytosol"/>
    <property type="evidence" value="ECO:0007669"/>
    <property type="project" value="TreeGrafter"/>
</dbReference>
<dbReference type="GO" id="GO:0051539">
    <property type="term" value="F:4 iron, 4 sulfur cluster binding"/>
    <property type="evidence" value="ECO:0007669"/>
    <property type="project" value="UniProtKB-UniRule"/>
</dbReference>
<dbReference type="GO" id="GO:0046872">
    <property type="term" value="F:metal ion binding"/>
    <property type="evidence" value="ECO:0007669"/>
    <property type="project" value="UniProtKB-KW"/>
</dbReference>
<dbReference type="GO" id="GO:0035597">
    <property type="term" value="F:N6-isopentenyladenosine methylthiotransferase activity"/>
    <property type="evidence" value="ECO:0007669"/>
    <property type="project" value="TreeGrafter"/>
</dbReference>
<dbReference type="CDD" id="cd01335">
    <property type="entry name" value="Radical_SAM"/>
    <property type="match status" value="1"/>
</dbReference>
<dbReference type="FunFam" id="3.40.50.12160:FF:000001">
    <property type="entry name" value="tRNA-2-methylthio-N(6)-dimethylallyladenosine synthase"/>
    <property type="match status" value="1"/>
</dbReference>
<dbReference type="FunFam" id="3.80.30.20:FF:000001">
    <property type="entry name" value="tRNA-2-methylthio-N(6)-dimethylallyladenosine synthase 2"/>
    <property type="match status" value="1"/>
</dbReference>
<dbReference type="Gene3D" id="3.40.50.12160">
    <property type="entry name" value="Methylthiotransferase, N-terminal domain"/>
    <property type="match status" value="1"/>
</dbReference>
<dbReference type="Gene3D" id="3.80.30.20">
    <property type="entry name" value="tm_1862 like domain"/>
    <property type="match status" value="1"/>
</dbReference>
<dbReference type="HAMAP" id="MF_01864">
    <property type="entry name" value="tRNA_metthiotr_MiaB"/>
    <property type="match status" value="1"/>
</dbReference>
<dbReference type="InterPro" id="IPR006638">
    <property type="entry name" value="Elp3/MiaA/NifB-like_rSAM"/>
</dbReference>
<dbReference type="InterPro" id="IPR005839">
    <property type="entry name" value="Methylthiotransferase"/>
</dbReference>
<dbReference type="InterPro" id="IPR020612">
    <property type="entry name" value="Methylthiotransferase_CS"/>
</dbReference>
<dbReference type="InterPro" id="IPR013848">
    <property type="entry name" value="Methylthiotransferase_N"/>
</dbReference>
<dbReference type="InterPro" id="IPR038135">
    <property type="entry name" value="Methylthiotransferase_N_sf"/>
</dbReference>
<dbReference type="InterPro" id="IPR006463">
    <property type="entry name" value="MiaB_methiolase"/>
</dbReference>
<dbReference type="InterPro" id="IPR007197">
    <property type="entry name" value="rSAM"/>
</dbReference>
<dbReference type="InterPro" id="IPR023404">
    <property type="entry name" value="rSAM_horseshoe"/>
</dbReference>
<dbReference type="InterPro" id="IPR002792">
    <property type="entry name" value="TRAM_dom"/>
</dbReference>
<dbReference type="NCBIfam" id="TIGR01574">
    <property type="entry name" value="miaB-methiolase"/>
    <property type="match status" value="1"/>
</dbReference>
<dbReference type="NCBIfam" id="TIGR00089">
    <property type="entry name" value="MiaB/RimO family radical SAM methylthiotransferase"/>
    <property type="match status" value="1"/>
</dbReference>
<dbReference type="PANTHER" id="PTHR43020">
    <property type="entry name" value="CDK5 REGULATORY SUBUNIT-ASSOCIATED PROTEIN 1"/>
    <property type="match status" value="1"/>
</dbReference>
<dbReference type="PANTHER" id="PTHR43020:SF2">
    <property type="entry name" value="MITOCHONDRIAL TRNA METHYLTHIOTRANSFERASE CDK5RAP1"/>
    <property type="match status" value="1"/>
</dbReference>
<dbReference type="Pfam" id="PF04055">
    <property type="entry name" value="Radical_SAM"/>
    <property type="match status" value="1"/>
</dbReference>
<dbReference type="Pfam" id="PF01938">
    <property type="entry name" value="TRAM"/>
    <property type="match status" value="1"/>
</dbReference>
<dbReference type="Pfam" id="PF00919">
    <property type="entry name" value="UPF0004"/>
    <property type="match status" value="1"/>
</dbReference>
<dbReference type="SFLD" id="SFLDF00273">
    <property type="entry name" value="(dimethylallyl)adenosine_tRNA"/>
    <property type="match status" value="1"/>
</dbReference>
<dbReference type="SFLD" id="SFLDG01082">
    <property type="entry name" value="B12-binding_domain_containing"/>
    <property type="match status" value="1"/>
</dbReference>
<dbReference type="SFLD" id="SFLDG01061">
    <property type="entry name" value="methylthiotransferase"/>
    <property type="match status" value="1"/>
</dbReference>
<dbReference type="SMART" id="SM00729">
    <property type="entry name" value="Elp3"/>
    <property type="match status" value="1"/>
</dbReference>
<dbReference type="SUPFAM" id="SSF102114">
    <property type="entry name" value="Radical SAM enzymes"/>
    <property type="match status" value="1"/>
</dbReference>
<dbReference type="PROSITE" id="PS51449">
    <property type="entry name" value="MTTASE_N"/>
    <property type="match status" value="1"/>
</dbReference>
<dbReference type="PROSITE" id="PS01278">
    <property type="entry name" value="MTTASE_RADICAL"/>
    <property type="match status" value="1"/>
</dbReference>
<dbReference type="PROSITE" id="PS51918">
    <property type="entry name" value="RADICAL_SAM"/>
    <property type="match status" value="1"/>
</dbReference>
<dbReference type="PROSITE" id="PS50926">
    <property type="entry name" value="TRAM"/>
    <property type="match status" value="1"/>
</dbReference>
<geneLocation type="plasmid">
    <name>megaplasmid Spo</name>
</geneLocation>
<organism>
    <name type="scientific">Ruegeria pomeroyi (strain ATCC 700808 / DSM 15171 / DSS-3)</name>
    <name type="common">Silicibacter pomeroyi</name>
    <dbReference type="NCBI Taxonomy" id="246200"/>
    <lineage>
        <taxon>Bacteria</taxon>
        <taxon>Pseudomonadati</taxon>
        <taxon>Pseudomonadota</taxon>
        <taxon>Alphaproteobacteria</taxon>
        <taxon>Rhodobacterales</taxon>
        <taxon>Roseobacteraceae</taxon>
        <taxon>Ruegeria</taxon>
    </lineage>
</organism>
<keyword id="KW-0004">4Fe-4S</keyword>
<keyword id="KW-0963">Cytoplasm</keyword>
<keyword id="KW-0408">Iron</keyword>
<keyword id="KW-0411">Iron-sulfur</keyword>
<keyword id="KW-0479">Metal-binding</keyword>
<keyword id="KW-0614">Plasmid</keyword>
<keyword id="KW-1185">Reference proteome</keyword>
<keyword id="KW-0949">S-adenosyl-L-methionine</keyword>
<keyword id="KW-0808">Transferase</keyword>
<keyword id="KW-0819">tRNA processing</keyword>
<name>MIAB_RUEPO</name>
<feature type="chain" id="PRO_0000374556" description="tRNA-2-methylthio-N(6)-dimethylallyladenosine synthase">
    <location>
        <begin position="1"/>
        <end position="439"/>
    </location>
</feature>
<feature type="domain" description="MTTase N-terminal" evidence="1">
    <location>
        <begin position="5"/>
        <end position="121"/>
    </location>
</feature>
<feature type="domain" description="Radical SAM core" evidence="2">
    <location>
        <begin position="145"/>
        <end position="378"/>
    </location>
</feature>
<feature type="domain" description="TRAM" evidence="1">
    <location>
        <begin position="378"/>
        <end position="439"/>
    </location>
</feature>
<feature type="binding site" evidence="1">
    <location>
        <position position="14"/>
    </location>
    <ligand>
        <name>[4Fe-4S] cluster</name>
        <dbReference type="ChEBI" id="CHEBI:49883"/>
        <label>1</label>
    </ligand>
</feature>
<feature type="binding site" evidence="1">
    <location>
        <position position="50"/>
    </location>
    <ligand>
        <name>[4Fe-4S] cluster</name>
        <dbReference type="ChEBI" id="CHEBI:49883"/>
        <label>1</label>
    </ligand>
</feature>
<feature type="binding site" evidence="1">
    <location>
        <position position="84"/>
    </location>
    <ligand>
        <name>[4Fe-4S] cluster</name>
        <dbReference type="ChEBI" id="CHEBI:49883"/>
        <label>1</label>
    </ligand>
</feature>
<feature type="binding site" evidence="1">
    <location>
        <position position="159"/>
    </location>
    <ligand>
        <name>[4Fe-4S] cluster</name>
        <dbReference type="ChEBI" id="CHEBI:49883"/>
        <label>2</label>
        <note>4Fe-4S-S-AdoMet</note>
    </ligand>
</feature>
<feature type="binding site" evidence="1">
    <location>
        <position position="163"/>
    </location>
    <ligand>
        <name>[4Fe-4S] cluster</name>
        <dbReference type="ChEBI" id="CHEBI:49883"/>
        <label>2</label>
        <note>4Fe-4S-S-AdoMet</note>
    </ligand>
</feature>
<feature type="binding site" evidence="1">
    <location>
        <position position="166"/>
    </location>
    <ligand>
        <name>[4Fe-4S] cluster</name>
        <dbReference type="ChEBI" id="CHEBI:49883"/>
        <label>2</label>
        <note>4Fe-4S-S-AdoMet</note>
    </ligand>
</feature>
<comment type="function">
    <text evidence="1">Catalyzes the methylthiolation of N6-(dimethylallyl)adenosine (i(6)A), leading to the formation of 2-methylthio-N6-(dimethylallyl)adenosine (ms(2)i(6)A) at position 37 in tRNAs that read codons beginning with uridine.</text>
</comment>
<comment type="catalytic activity">
    <reaction evidence="1">
        <text>N(6)-dimethylallyladenosine(37) in tRNA + (sulfur carrier)-SH + AH2 + 2 S-adenosyl-L-methionine = 2-methylsulfanyl-N(6)-dimethylallyladenosine(37) in tRNA + (sulfur carrier)-H + 5'-deoxyadenosine + L-methionine + A + S-adenosyl-L-homocysteine + 2 H(+)</text>
        <dbReference type="Rhea" id="RHEA:37067"/>
        <dbReference type="Rhea" id="RHEA-COMP:10375"/>
        <dbReference type="Rhea" id="RHEA-COMP:10376"/>
        <dbReference type="Rhea" id="RHEA-COMP:14737"/>
        <dbReference type="Rhea" id="RHEA-COMP:14739"/>
        <dbReference type="ChEBI" id="CHEBI:13193"/>
        <dbReference type="ChEBI" id="CHEBI:15378"/>
        <dbReference type="ChEBI" id="CHEBI:17319"/>
        <dbReference type="ChEBI" id="CHEBI:17499"/>
        <dbReference type="ChEBI" id="CHEBI:29917"/>
        <dbReference type="ChEBI" id="CHEBI:57844"/>
        <dbReference type="ChEBI" id="CHEBI:57856"/>
        <dbReference type="ChEBI" id="CHEBI:59789"/>
        <dbReference type="ChEBI" id="CHEBI:64428"/>
        <dbReference type="ChEBI" id="CHEBI:74415"/>
        <dbReference type="ChEBI" id="CHEBI:74417"/>
        <dbReference type="EC" id="2.8.4.3"/>
    </reaction>
</comment>
<comment type="cofactor">
    <cofactor evidence="1">
        <name>[4Fe-4S] cluster</name>
        <dbReference type="ChEBI" id="CHEBI:49883"/>
    </cofactor>
    <text evidence="1">Binds 2 [4Fe-4S] clusters. One cluster is coordinated with 3 cysteines and an exchangeable S-adenosyl-L-methionine.</text>
</comment>
<comment type="subunit">
    <text evidence="1">Monomer.</text>
</comment>
<comment type="subcellular location">
    <subcellularLocation>
        <location evidence="1">Cytoplasm</location>
    </subcellularLocation>
</comment>
<comment type="similarity">
    <text evidence="1">Belongs to the methylthiotransferase family. MiaB subfamily.</text>
</comment>
<comment type="sequence caution" evidence="3">
    <conflict type="erroneous initiation">
        <sequence resource="EMBL-CDS" id="AAV97143"/>
    </conflict>
</comment>
<protein>
    <recommendedName>
        <fullName evidence="1">tRNA-2-methylthio-N(6)-dimethylallyladenosine synthase</fullName>
        <ecNumber evidence="1">2.8.4.3</ecNumber>
    </recommendedName>
    <alternativeName>
        <fullName evidence="1">(Dimethylallyl)adenosine tRNA methylthiotransferase MiaB</fullName>
    </alternativeName>
    <alternativeName>
        <fullName evidence="1">tRNA-i(6)A37 methylthiotransferase</fullName>
    </alternativeName>
</protein>
<gene>
    <name evidence="1" type="primary">miaB</name>
    <name type="ordered locus">SPOA0002</name>
</gene>
<proteinExistence type="inferred from homology"/>
<sequence length="439" mass="48688">MSDPKKLFIKTYGCQMNVYDSERMAEALGGQGYVETQSAEDADMILLNTCHIREKAAEKVYSELGRFKGLKAAKPDLKIGVAGCVAQAEGEEIMRRQPLVDLVVGPQSYHRLPELEAKTRAGEKALDTDFPEEDKFEKLKGRPKAKRGPTAFLTVQEGCDKFCAFCVVPYTRGAEVSRPADRILREANELVERGVREITLLGQNVNAYHGAGPNGDMTLAGLIWELDKIDGLERIRFTTSHPNDMADDLIEAHGTCAKLMPYLHLPVQAGSDKILKRMNRSHTAESYLRLIERIRAARPDIVMSGDFIVGFPEETEADFQDTLDLVEQVRYGYAYSFKYSTRPGTPAAERAQVDPAEADDRLQRLQAVITRHQREIQDGMVGREVSVLFEKPGRQPGQMVGKSEYLHAVHVQDPGLEAGQIARVRIVASGANSLAGELA</sequence>
<accession>Q5LLM0</accession>
<evidence type="ECO:0000255" key="1">
    <source>
        <dbReference type="HAMAP-Rule" id="MF_01864"/>
    </source>
</evidence>
<evidence type="ECO:0000255" key="2">
    <source>
        <dbReference type="PROSITE-ProRule" id="PRU01266"/>
    </source>
</evidence>
<evidence type="ECO:0000305" key="3"/>
<reference key="1">
    <citation type="journal article" date="2004" name="Nature">
        <title>Genome sequence of Silicibacter pomeroyi reveals adaptations to the marine environment.</title>
        <authorList>
            <person name="Moran M.A."/>
            <person name="Buchan A."/>
            <person name="Gonzalez J.M."/>
            <person name="Heidelberg J.F."/>
            <person name="Whitman W.B."/>
            <person name="Kiene R.P."/>
            <person name="Henriksen J.R."/>
            <person name="King G.M."/>
            <person name="Belas R."/>
            <person name="Fuqua C."/>
            <person name="Brinkac L.M."/>
            <person name="Lewis M."/>
            <person name="Johri S."/>
            <person name="Weaver B."/>
            <person name="Pai G."/>
            <person name="Eisen J.A."/>
            <person name="Rahe E."/>
            <person name="Sheldon W.M."/>
            <person name="Ye W."/>
            <person name="Miller T.R."/>
            <person name="Carlton J."/>
            <person name="Rasko D.A."/>
            <person name="Paulsen I.T."/>
            <person name="Ren Q."/>
            <person name="Daugherty S.C."/>
            <person name="DeBoy R.T."/>
            <person name="Dodson R.J."/>
            <person name="Durkin A.S."/>
            <person name="Madupu R."/>
            <person name="Nelson W.C."/>
            <person name="Sullivan S.A."/>
            <person name="Rosovitz M.J."/>
            <person name="Haft D.H."/>
            <person name="Selengut J."/>
            <person name="Ward N."/>
        </authorList>
    </citation>
    <scope>NUCLEOTIDE SEQUENCE [LARGE SCALE GENOMIC DNA]</scope>
    <source>
        <strain>ATCC 700808 / DSM 15171 / DSS-3</strain>
    </source>
</reference>
<reference key="2">
    <citation type="journal article" date="2014" name="Stand. Genomic Sci.">
        <title>An updated genome annotation for the model marine bacterium Ruegeria pomeroyi DSS-3.</title>
        <authorList>
            <person name="Rivers A.R."/>
            <person name="Smith C.B."/>
            <person name="Moran M.A."/>
        </authorList>
    </citation>
    <scope>GENOME REANNOTATION</scope>
    <source>
        <strain>ATCC 700808 / DSM 15171 / DSS-3</strain>
    </source>
</reference>